<organism>
    <name type="scientific">Shigella sonnei (strain Ss046)</name>
    <dbReference type="NCBI Taxonomy" id="300269"/>
    <lineage>
        <taxon>Bacteria</taxon>
        <taxon>Pseudomonadati</taxon>
        <taxon>Pseudomonadota</taxon>
        <taxon>Gammaproteobacteria</taxon>
        <taxon>Enterobacterales</taxon>
        <taxon>Enterobacteriaceae</taxon>
        <taxon>Shigella</taxon>
    </lineage>
</organism>
<sequence length="143" mass="15463">MAIERTFSIIKPNAVAKNVIGNIFARFEAAGFKIVGTKMLHLTVEQARGFYAEHDGKPFFDGLVEFMTSGPIVVSVLEGENAVQRHRDLLGATNPANALAGTLRADYADSLTENGTHGSDSVESAAREIAYFFGEGEVCPRTR</sequence>
<evidence type="ECO:0000255" key="1">
    <source>
        <dbReference type="HAMAP-Rule" id="MF_00451"/>
    </source>
</evidence>
<protein>
    <recommendedName>
        <fullName evidence="1">Nucleoside diphosphate kinase</fullName>
        <shortName evidence="1">NDK</shortName>
        <shortName evidence="1">NDP kinase</shortName>
        <ecNumber evidence="1">2.7.4.6</ecNumber>
    </recommendedName>
    <alternativeName>
        <fullName evidence="1">Nucleoside-2-P kinase</fullName>
    </alternativeName>
</protein>
<reference key="1">
    <citation type="journal article" date="2005" name="Nucleic Acids Res.">
        <title>Genome dynamics and diversity of Shigella species, the etiologic agents of bacillary dysentery.</title>
        <authorList>
            <person name="Yang F."/>
            <person name="Yang J."/>
            <person name="Zhang X."/>
            <person name="Chen L."/>
            <person name="Jiang Y."/>
            <person name="Yan Y."/>
            <person name="Tang X."/>
            <person name="Wang J."/>
            <person name="Xiong Z."/>
            <person name="Dong J."/>
            <person name="Xue Y."/>
            <person name="Zhu Y."/>
            <person name="Xu X."/>
            <person name="Sun L."/>
            <person name="Chen S."/>
            <person name="Nie H."/>
            <person name="Peng J."/>
            <person name="Xu J."/>
            <person name="Wang Y."/>
            <person name="Yuan Z."/>
            <person name="Wen Y."/>
            <person name="Yao Z."/>
            <person name="Shen Y."/>
            <person name="Qiang B."/>
            <person name="Hou Y."/>
            <person name="Yu J."/>
            <person name="Jin Q."/>
        </authorList>
    </citation>
    <scope>NUCLEOTIDE SEQUENCE [LARGE SCALE GENOMIC DNA]</scope>
    <source>
        <strain>Ss046</strain>
    </source>
</reference>
<dbReference type="EC" id="2.7.4.6" evidence="1"/>
<dbReference type="EMBL" id="CP000038">
    <property type="protein sequence ID" value="AAZ89228.1"/>
    <property type="molecule type" value="Genomic_DNA"/>
</dbReference>
<dbReference type="RefSeq" id="WP_000963837.1">
    <property type="nucleotide sequence ID" value="NC_007384.1"/>
</dbReference>
<dbReference type="SMR" id="Q3YZ34"/>
<dbReference type="GeneID" id="93774618"/>
<dbReference type="KEGG" id="ssn:SSON_2600"/>
<dbReference type="HOGENOM" id="CLU_060216_8_1_6"/>
<dbReference type="Proteomes" id="UP000002529">
    <property type="component" value="Chromosome"/>
</dbReference>
<dbReference type="GO" id="GO:0005737">
    <property type="term" value="C:cytoplasm"/>
    <property type="evidence" value="ECO:0007669"/>
    <property type="project" value="UniProtKB-SubCell"/>
</dbReference>
<dbReference type="GO" id="GO:0005524">
    <property type="term" value="F:ATP binding"/>
    <property type="evidence" value="ECO:0007669"/>
    <property type="project" value="UniProtKB-UniRule"/>
</dbReference>
<dbReference type="GO" id="GO:0046872">
    <property type="term" value="F:metal ion binding"/>
    <property type="evidence" value="ECO:0007669"/>
    <property type="project" value="UniProtKB-KW"/>
</dbReference>
<dbReference type="GO" id="GO:0004550">
    <property type="term" value="F:nucleoside diphosphate kinase activity"/>
    <property type="evidence" value="ECO:0007669"/>
    <property type="project" value="UniProtKB-UniRule"/>
</dbReference>
<dbReference type="GO" id="GO:0006241">
    <property type="term" value="P:CTP biosynthetic process"/>
    <property type="evidence" value="ECO:0007669"/>
    <property type="project" value="UniProtKB-UniRule"/>
</dbReference>
<dbReference type="GO" id="GO:0006183">
    <property type="term" value="P:GTP biosynthetic process"/>
    <property type="evidence" value="ECO:0007669"/>
    <property type="project" value="UniProtKB-UniRule"/>
</dbReference>
<dbReference type="GO" id="GO:0006228">
    <property type="term" value="P:UTP biosynthetic process"/>
    <property type="evidence" value="ECO:0007669"/>
    <property type="project" value="UniProtKB-UniRule"/>
</dbReference>
<dbReference type="CDD" id="cd04413">
    <property type="entry name" value="NDPk_I"/>
    <property type="match status" value="1"/>
</dbReference>
<dbReference type="FunFam" id="3.30.70.141:FF:000001">
    <property type="entry name" value="Nucleoside diphosphate kinase"/>
    <property type="match status" value="1"/>
</dbReference>
<dbReference type="Gene3D" id="3.30.70.141">
    <property type="entry name" value="Nucleoside diphosphate kinase-like domain"/>
    <property type="match status" value="1"/>
</dbReference>
<dbReference type="HAMAP" id="MF_00451">
    <property type="entry name" value="NDP_kinase"/>
    <property type="match status" value="1"/>
</dbReference>
<dbReference type="InterPro" id="IPR034907">
    <property type="entry name" value="NDK-like_dom"/>
</dbReference>
<dbReference type="InterPro" id="IPR036850">
    <property type="entry name" value="NDK-like_dom_sf"/>
</dbReference>
<dbReference type="InterPro" id="IPR001564">
    <property type="entry name" value="Nucleoside_diP_kinase"/>
</dbReference>
<dbReference type="InterPro" id="IPR023005">
    <property type="entry name" value="Nucleoside_diP_kinase_AS"/>
</dbReference>
<dbReference type="NCBIfam" id="NF001908">
    <property type="entry name" value="PRK00668.1"/>
    <property type="match status" value="1"/>
</dbReference>
<dbReference type="PANTHER" id="PTHR46161">
    <property type="entry name" value="NUCLEOSIDE DIPHOSPHATE KINASE"/>
    <property type="match status" value="1"/>
</dbReference>
<dbReference type="PANTHER" id="PTHR46161:SF3">
    <property type="entry name" value="NUCLEOSIDE DIPHOSPHATE KINASE DDB_G0292928-RELATED"/>
    <property type="match status" value="1"/>
</dbReference>
<dbReference type="Pfam" id="PF00334">
    <property type="entry name" value="NDK"/>
    <property type="match status" value="1"/>
</dbReference>
<dbReference type="PRINTS" id="PR01243">
    <property type="entry name" value="NUCDPKINASE"/>
</dbReference>
<dbReference type="SMART" id="SM00562">
    <property type="entry name" value="NDK"/>
    <property type="match status" value="1"/>
</dbReference>
<dbReference type="SUPFAM" id="SSF54919">
    <property type="entry name" value="Nucleoside diphosphate kinase, NDK"/>
    <property type="match status" value="1"/>
</dbReference>
<dbReference type="PROSITE" id="PS00469">
    <property type="entry name" value="NDPK"/>
    <property type="match status" value="1"/>
</dbReference>
<dbReference type="PROSITE" id="PS51374">
    <property type="entry name" value="NDPK_LIKE"/>
    <property type="match status" value="1"/>
</dbReference>
<keyword id="KW-0067">ATP-binding</keyword>
<keyword id="KW-0963">Cytoplasm</keyword>
<keyword id="KW-0418">Kinase</keyword>
<keyword id="KW-0460">Magnesium</keyword>
<keyword id="KW-0479">Metal-binding</keyword>
<keyword id="KW-0546">Nucleotide metabolism</keyword>
<keyword id="KW-0547">Nucleotide-binding</keyword>
<keyword id="KW-0597">Phosphoprotein</keyword>
<keyword id="KW-1185">Reference proteome</keyword>
<keyword id="KW-0808">Transferase</keyword>
<feature type="chain" id="PRO_0000226579" description="Nucleoside diphosphate kinase">
    <location>
        <begin position="1"/>
        <end position="143"/>
    </location>
</feature>
<feature type="active site" description="Pros-phosphohistidine intermediate" evidence="1">
    <location>
        <position position="117"/>
    </location>
</feature>
<feature type="binding site" evidence="1">
    <location>
        <position position="11"/>
    </location>
    <ligand>
        <name>ATP</name>
        <dbReference type="ChEBI" id="CHEBI:30616"/>
    </ligand>
</feature>
<feature type="binding site" evidence="1">
    <location>
        <position position="59"/>
    </location>
    <ligand>
        <name>ATP</name>
        <dbReference type="ChEBI" id="CHEBI:30616"/>
    </ligand>
</feature>
<feature type="binding site" evidence="1">
    <location>
        <position position="87"/>
    </location>
    <ligand>
        <name>ATP</name>
        <dbReference type="ChEBI" id="CHEBI:30616"/>
    </ligand>
</feature>
<feature type="binding site" evidence="1">
    <location>
        <position position="93"/>
    </location>
    <ligand>
        <name>ATP</name>
        <dbReference type="ChEBI" id="CHEBI:30616"/>
    </ligand>
</feature>
<feature type="binding site" evidence="1">
    <location>
        <position position="104"/>
    </location>
    <ligand>
        <name>ATP</name>
        <dbReference type="ChEBI" id="CHEBI:30616"/>
    </ligand>
</feature>
<feature type="binding site" evidence="1">
    <location>
        <position position="114"/>
    </location>
    <ligand>
        <name>ATP</name>
        <dbReference type="ChEBI" id="CHEBI:30616"/>
    </ligand>
</feature>
<proteinExistence type="inferred from homology"/>
<gene>
    <name evidence="1" type="primary">ndk</name>
    <name type="ordered locus">SSON_2600</name>
</gene>
<comment type="function">
    <text evidence="1">Major role in the synthesis of nucleoside triphosphates other than ATP. The ATP gamma phosphate is transferred to the NDP beta phosphate via a ping-pong mechanism, using a phosphorylated active-site intermediate.</text>
</comment>
<comment type="catalytic activity">
    <reaction evidence="1">
        <text>a 2'-deoxyribonucleoside 5'-diphosphate + ATP = a 2'-deoxyribonucleoside 5'-triphosphate + ADP</text>
        <dbReference type="Rhea" id="RHEA:44640"/>
        <dbReference type="ChEBI" id="CHEBI:30616"/>
        <dbReference type="ChEBI" id="CHEBI:61560"/>
        <dbReference type="ChEBI" id="CHEBI:73316"/>
        <dbReference type="ChEBI" id="CHEBI:456216"/>
        <dbReference type="EC" id="2.7.4.6"/>
    </reaction>
</comment>
<comment type="catalytic activity">
    <reaction evidence="1">
        <text>a ribonucleoside 5'-diphosphate + ATP = a ribonucleoside 5'-triphosphate + ADP</text>
        <dbReference type="Rhea" id="RHEA:18113"/>
        <dbReference type="ChEBI" id="CHEBI:30616"/>
        <dbReference type="ChEBI" id="CHEBI:57930"/>
        <dbReference type="ChEBI" id="CHEBI:61557"/>
        <dbReference type="ChEBI" id="CHEBI:456216"/>
        <dbReference type="EC" id="2.7.4.6"/>
    </reaction>
</comment>
<comment type="cofactor">
    <cofactor evidence="1">
        <name>Mg(2+)</name>
        <dbReference type="ChEBI" id="CHEBI:18420"/>
    </cofactor>
</comment>
<comment type="subunit">
    <text evidence="1">Homotetramer.</text>
</comment>
<comment type="subcellular location">
    <subcellularLocation>
        <location evidence="1">Cytoplasm</location>
    </subcellularLocation>
</comment>
<comment type="similarity">
    <text evidence="1">Belongs to the NDK family.</text>
</comment>
<accession>Q3YZ34</accession>
<name>NDK_SHISS</name>